<reference key="1">
    <citation type="journal article" date="2004" name="J. Mol. Microbiol. Biotechnol.">
        <title>The complete genome sequence of Bacillus licheniformis DSM13, an organism with great industrial potential.</title>
        <authorList>
            <person name="Veith B."/>
            <person name="Herzberg C."/>
            <person name="Steckel S."/>
            <person name="Feesche J."/>
            <person name="Maurer K.H."/>
            <person name="Ehrenreich P."/>
            <person name="Baeumer S."/>
            <person name="Henne A."/>
            <person name="Liesegang H."/>
            <person name="Merkl R."/>
            <person name="Ehrenreich A."/>
            <person name="Gottschalk G."/>
        </authorList>
    </citation>
    <scope>NUCLEOTIDE SEQUENCE [LARGE SCALE GENOMIC DNA]</scope>
    <source>
        <strain>ATCC 14580 / DSM 13 / JCM 2505 / CCUG 7422 / NBRC 12200 / NCIMB 9375 / NCTC 10341 / NRRL NRS-1264 / Gibson 46</strain>
    </source>
</reference>
<reference key="2">
    <citation type="journal article" date="2004" name="Genome Biol.">
        <title>Complete genome sequence of the industrial bacterium Bacillus licheniformis and comparisons with closely related Bacillus species.</title>
        <authorList>
            <person name="Rey M.W."/>
            <person name="Ramaiya P."/>
            <person name="Nelson B.A."/>
            <person name="Brody-Karpin S.D."/>
            <person name="Zaretsky E.J."/>
            <person name="Tang M."/>
            <person name="Lopez de Leon A."/>
            <person name="Xiang H."/>
            <person name="Gusti V."/>
            <person name="Clausen I.G."/>
            <person name="Olsen P.B."/>
            <person name="Rasmussen M.D."/>
            <person name="Andersen J.T."/>
            <person name="Joergensen P.L."/>
            <person name="Larsen T.S."/>
            <person name="Sorokin A."/>
            <person name="Bolotin A."/>
            <person name="Lapidus A."/>
            <person name="Galleron N."/>
            <person name="Ehrlich S.D."/>
            <person name="Berka R.M."/>
        </authorList>
    </citation>
    <scope>NUCLEOTIDE SEQUENCE [LARGE SCALE GENOMIC DNA]</scope>
    <source>
        <strain>ATCC 14580 / DSM 13 / JCM 2505 / CCUG 7422 / NBRC 12200 / NCIMB 9375 / NCTC 10341 / NRRL NRS-1264 / Gibson 46</strain>
    </source>
</reference>
<proteinExistence type="inferred from homology"/>
<gene>
    <name evidence="1" type="primary">clpP2</name>
    <name type="ordered locus">BLi03890</name>
    <name type="ordered locus">BL05355</name>
</gene>
<comment type="function">
    <text evidence="1">Cleaves peptides in various proteins in a process that requires ATP hydrolysis. Has a chymotrypsin-like activity. Plays a major role in the degradation of misfolded proteins.</text>
</comment>
<comment type="catalytic activity">
    <reaction evidence="1">
        <text>Hydrolysis of proteins to small peptides in the presence of ATP and magnesium. alpha-casein is the usual test substrate. In the absence of ATP, only oligopeptides shorter than five residues are hydrolyzed (such as succinyl-Leu-Tyr-|-NHMec, and Leu-Tyr-Leu-|-Tyr-Trp, in which cleavage of the -Tyr-|-Leu- and -Tyr-|-Trp bonds also occurs).</text>
        <dbReference type="EC" id="3.4.21.92"/>
    </reaction>
</comment>
<comment type="subunit">
    <text evidence="1">Fourteen ClpP subunits assemble into 2 heptameric rings which stack back to back to give a disk-like structure with a central cavity, resembling the structure of eukaryotic proteasomes.</text>
</comment>
<comment type="subcellular location">
    <subcellularLocation>
        <location evidence="1">Cytoplasm</location>
    </subcellularLocation>
</comment>
<comment type="similarity">
    <text evidence="1">Belongs to the peptidase S14 family.</text>
</comment>
<feature type="chain" id="PRO_0000179498" description="ATP-dependent Clp protease proteolytic subunit 2">
    <location>
        <begin position="1"/>
        <end position="190"/>
    </location>
</feature>
<feature type="active site" description="Nucleophile" evidence="1">
    <location>
        <position position="98"/>
    </location>
</feature>
<feature type="active site" evidence="1">
    <location>
        <position position="123"/>
    </location>
</feature>
<organism>
    <name type="scientific">Bacillus licheniformis (strain ATCC 14580 / DSM 13 / JCM 2505 / CCUG 7422 / NBRC 12200 / NCIMB 9375 / NCTC 10341 / NRRL NRS-1264 / Gibson 46)</name>
    <dbReference type="NCBI Taxonomy" id="279010"/>
    <lineage>
        <taxon>Bacteria</taxon>
        <taxon>Bacillati</taxon>
        <taxon>Bacillota</taxon>
        <taxon>Bacilli</taxon>
        <taxon>Bacillales</taxon>
        <taxon>Bacillaceae</taxon>
        <taxon>Bacillus</taxon>
    </lineage>
</organism>
<protein>
    <recommendedName>
        <fullName evidence="1">ATP-dependent Clp protease proteolytic subunit 2</fullName>
        <ecNumber evidence="1">3.4.21.92</ecNumber>
    </recommendedName>
    <alternativeName>
        <fullName evidence="1">Endopeptidase Clp 2</fullName>
    </alternativeName>
</protein>
<evidence type="ECO:0000255" key="1">
    <source>
        <dbReference type="HAMAP-Rule" id="MF_00444"/>
    </source>
</evidence>
<dbReference type="EC" id="3.4.21.92" evidence="1"/>
<dbReference type="EMBL" id="AE017333">
    <property type="protein sequence ID" value="AAU42704.1"/>
    <property type="molecule type" value="Genomic_DNA"/>
</dbReference>
<dbReference type="EMBL" id="CP000002">
    <property type="protein sequence ID" value="AAU25330.1"/>
    <property type="molecule type" value="Genomic_DNA"/>
</dbReference>
<dbReference type="RefSeq" id="WP_003185937.1">
    <property type="nucleotide sequence ID" value="NC_006322.1"/>
</dbReference>
<dbReference type="SMR" id="Q65E10"/>
<dbReference type="STRING" id="279010.BL05355"/>
<dbReference type="MEROPS" id="S14.001"/>
<dbReference type="KEGG" id="bld:BLi03890"/>
<dbReference type="KEGG" id="bli:BL05355"/>
<dbReference type="eggNOG" id="COG0740">
    <property type="taxonomic scope" value="Bacteria"/>
</dbReference>
<dbReference type="HOGENOM" id="CLU_058707_3_2_9"/>
<dbReference type="Proteomes" id="UP000000606">
    <property type="component" value="Chromosome"/>
</dbReference>
<dbReference type="GO" id="GO:0005737">
    <property type="term" value="C:cytoplasm"/>
    <property type="evidence" value="ECO:0007669"/>
    <property type="project" value="UniProtKB-SubCell"/>
</dbReference>
<dbReference type="GO" id="GO:0009368">
    <property type="term" value="C:endopeptidase Clp complex"/>
    <property type="evidence" value="ECO:0007669"/>
    <property type="project" value="TreeGrafter"/>
</dbReference>
<dbReference type="GO" id="GO:0004176">
    <property type="term" value="F:ATP-dependent peptidase activity"/>
    <property type="evidence" value="ECO:0007669"/>
    <property type="project" value="InterPro"/>
</dbReference>
<dbReference type="GO" id="GO:0051117">
    <property type="term" value="F:ATPase binding"/>
    <property type="evidence" value="ECO:0007669"/>
    <property type="project" value="TreeGrafter"/>
</dbReference>
<dbReference type="GO" id="GO:0004252">
    <property type="term" value="F:serine-type endopeptidase activity"/>
    <property type="evidence" value="ECO:0007669"/>
    <property type="project" value="UniProtKB-UniRule"/>
</dbReference>
<dbReference type="GO" id="GO:0006515">
    <property type="term" value="P:protein quality control for misfolded or incompletely synthesized proteins"/>
    <property type="evidence" value="ECO:0007669"/>
    <property type="project" value="TreeGrafter"/>
</dbReference>
<dbReference type="CDD" id="cd07017">
    <property type="entry name" value="S14_ClpP_2"/>
    <property type="match status" value="1"/>
</dbReference>
<dbReference type="FunFam" id="3.90.226.10:FF:000001">
    <property type="entry name" value="ATP-dependent Clp protease proteolytic subunit"/>
    <property type="match status" value="1"/>
</dbReference>
<dbReference type="Gene3D" id="3.90.226.10">
    <property type="entry name" value="2-enoyl-CoA Hydratase, Chain A, domain 1"/>
    <property type="match status" value="1"/>
</dbReference>
<dbReference type="HAMAP" id="MF_00444">
    <property type="entry name" value="ClpP"/>
    <property type="match status" value="1"/>
</dbReference>
<dbReference type="InterPro" id="IPR001907">
    <property type="entry name" value="ClpP"/>
</dbReference>
<dbReference type="InterPro" id="IPR029045">
    <property type="entry name" value="ClpP/crotonase-like_dom_sf"/>
</dbReference>
<dbReference type="InterPro" id="IPR023562">
    <property type="entry name" value="ClpP/TepA"/>
</dbReference>
<dbReference type="InterPro" id="IPR018215">
    <property type="entry name" value="ClpP_Ser_AS"/>
</dbReference>
<dbReference type="NCBIfam" id="NF001368">
    <property type="entry name" value="PRK00277.1"/>
    <property type="match status" value="1"/>
</dbReference>
<dbReference type="NCBIfam" id="NF009205">
    <property type="entry name" value="PRK12553.1"/>
    <property type="match status" value="1"/>
</dbReference>
<dbReference type="PANTHER" id="PTHR10381">
    <property type="entry name" value="ATP-DEPENDENT CLP PROTEASE PROTEOLYTIC SUBUNIT"/>
    <property type="match status" value="1"/>
</dbReference>
<dbReference type="PANTHER" id="PTHR10381:SF70">
    <property type="entry name" value="ATP-DEPENDENT CLP PROTEASE PROTEOLYTIC SUBUNIT"/>
    <property type="match status" value="1"/>
</dbReference>
<dbReference type="Pfam" id="PF00574">
    <property type="entry name" value="CLP_protease"/>
    <property type="match status" value="1"/>
</dbReference>
<dbReference type="PRINTS" id="PR00127">
    <property type="entry name" value="CLPPROTEASEP"/>
</dbReference>
<dbReference type="SUPFAM" id="SSF52096">
    <property type="entry name" value="ClpP/crotonase"/>
    <property type="match status" value="1"/>
</dbReference>
<dbReference type="PROSITE" id="PS00381">
    <property type="entry name" value="CLP_PROTEASE_SER"/>
    <property type="match status" value="1"/>
</dbReference>
<name>CLPP2_BACLD</name>
<keyword id="KW-0963">Cytoplasm</keyword>
<keyword id="KW-0378">Hydrolase</keyword>
<keyword id="KW-0645">Protease</keyword>
<keyword id="KW-1185">Reference proteome</keyword>
<keyword id="KW-0720">Serine protease</keyword>
<accession>Q65E10</accession>
<accession>Q62PI1</accession>
<sequence length="190" mass="21049">MNTIPYVIEKTAAGERSYDIFSRLLKDRIIMIGSEFNDDLANRVTAQLLFLSAEDNEKDISIYINSPGGSTSAGYAILDTMDYVKPDVRTICVGMAASMGAILLAGGAKGKRYALKNSEIMIHQPLGGVKGQATDMEISAKRIIKLREKIERFFHERTGQPIEKLKADMERDYFMDADEAKAYGVIDAVL</sequence>